<evidence type="ECO:0000255" key="1">
    <source>
        <dbReference type="HAMAP-Rule" id="MF_01878"/>
    </source>
</evidence>
<protein>
    <recommendedName>
        <fullName evidence="1">Dipeptide and tripeptide permease A</fullName>
    </recommendedName>
</protein>
<comment type="function">
    <text evidence="1">Proton-dependent permease that transports di- and tripeptides.</text>
</comment>
<comment type="subcellular location">
    <subcellularLocation>
        <location evidence="1">Cell inner membrane</location>
        <topology evidence="1">Multi-pass membrane protein</topology>
    </subcellularLocation>
</comment>
<comment type="similarity">
    <text evidence="1">Belongs to the major facilitator superfamily. Proton-dependent oligopeptide transporter (POT/PTR) (TC 2.A.17) family. DtpA subfamily.</text>
</comment>
<keyword id="KW-0997">Cell inner membrane</keyword>
<keyword id="KW-1003">Cell membrane</keyword>
<keyword id="KW-0472">Membrane</keyword>
<keyword id="KW-0571">Peptide transport</keyword>
<keyword id="KW-0653">Protein transport</keyword>
<keyword id="KW-0812">Transmembrane</keyword>
<keyword id="KW-1133">Transmembrane helix</keyword>
<keyword id="KW-0813">Transport</keyword>
<proteinExistence type="inferred from homology"/>
<organism>
    <name type="scientific">Erwinia pyrifoliae (strain DSM 12163 / CIP 106111 / Ep16/96)</name>
    <dbReference type="NCBI Taxonomy" id="644651"/>
    <lineage>
        <taxon>Bacteria</taxon>
        <taxon>Pseudomonadati</taxon>
        <taxon>Pseudomonadota</taxon>
        <taxon>Gammaproteobacteria</taxon>
        <taxon>Enterobacterales</taxon>
        <taxon>Erwiniaceae</taxon>
        <taxon>Erwinia</taxon>
    </lineage>
</organism>
<gene>
    <name evidence="1" type="primary">dtpA</name>
    <name type="ordered locus">EPYR_02021</name>
</gene>
<accession>D2TBH1</accession>
<feature type="chain" id="PRO_0000395177" description="Dipeptide and tripeptide permease A">
    <location>
        <begin position="1"/>
        <end position="492"/>
    </location>
</feature>
<feature type="topological domain" description="Cytoplasmic" evidence="1">
    <location>
        <begin position="1"/>
        <end position="20"/>
    </location>
</feature>
<feature type="transmembrane region" description="Helical" evidence="1">
    <location>
        <begin position="21"/>
        <end position="43"/>
    </location>
</feature>
<feature type="topological domain" description="Periplasmic" evidence="1">
    <location>
        <begin position="44"/>
        <end position="58"/>
    </location>
</feature>
<feature type="transmembrane region" description="Helical" evidence="1">
    <location>
        <begin position="59"/>
        <end position="79"/>
    </location>
</feature>
<feature type="topological domain" description="Cytoplasmic" evidence="1">
    <location>
        <begin position="80"/>
        <end position="88"/>
    </location>
</feature>
<feature type="transmembrane region" description="Helical" evidence="1">
    <location>
        <begin position="89"/>
        <end position="109"/>
    </location>
</feature>
<feature type="topological domain" description="Periplasmic" evidence="1">
    <location>
        <position position="110"/>
    </location>
</feature>
<feature type="transmembrane region" description="Helical" evidence="1">
    <location>
        <begin position="111"/>
        <end position="131"/>
    </location>
</feature>
<feature type="topological domain" description="Cytoplasmic" evidence="1">
    <location>
        <begin position="132"/>
        <end position="152"/>
    </location>
</feature>
<feature type="transmembrane region" description="Helical" evidence="1">
    <location>
        <begin position="153"/>
        <end position="173"/>
    </location>
</feature>
<feature type="topological domain" description="Periplasmic" evidence="1">
    <location>
        <begin position="174"/>
        <end position="178"/>
    </location>
</feature>
<feature type="transmembrane region" description="Helical" evidence="1">
    <location>
        <begin position="179"/>
        <end position="199"/>
    </location>
</feature>
<feature type="topological domain" description="Cytoplasmic" evidence="1">
    <location>
        <begin position="200"/>
        <end position="217"/>
    </location>
</feature>
<feature type="transmembrane region" description="Helical" evidence="1">
    <location>
        <begin position="218"/>
        <end position="238"/>
    </location>
</feature>
<feature type="topological domain" description="Periplasmic" evidence="1">
    <location>
        <begin position="239"/>
        <end position="245"/>
    </location>
</feature>
<feature type="transmembrane region" description="Helical" evidence="1">
    <location>
        <begin position="246"/>
        <end position="266"/>
    </location>
</feature>
<feature type="topological domain" description="Cytoplasmic" evidence="1">
    <location>
        <begin position="267"/>
        <end position="273"/>
    </location>
</feature>
<feature type="transmembrane region" description="Helical" evidence="1">
    <location>
        <begin position="274"/>
        <end position="294"/>
    </location>
</feature>
<feature type="topological domain" description="Periplasmic" evidence="1">
    <location>
        <begin position="295"/>
        <end position="319"/>
    </location>
</feature>
<feature type="transmembrane region" description="Helical" evidence="1">
    <location>
        <begin position="320"/>
        <end position="340"/>
    </location>
</feature>
<feature type="topological domain" description="Cytoplasmic" evidence="1">
    <location>
        <begin position="341"/>
        <end position="351"/>
    </location>
</feature>
<feature type="transmembrane region" description="Helical" evidence="1">
    <location>
        <begin position="352"/>
        <end position="372"/>
    </location>
</feature>
<feature type="topological domain" description="Periplasmic" evidence="1">
    <location>
        <begin position="373"/>
        <end position="377"/>
    </location>
</feature>
<feature type="transmembrane region" description="Helical" evidence="1">
    <location>
        <begin position="378"/>
        <end position="398"/>
    </location>
</feature>
<feature type="topological domain" description="Cytoplasmic" evidence="1">
    <location>
        <begin position="399"/>
        <end position="413"/>
    </location>
</feature>
<feature type="transmembrane region" description="Helical" evidence="1">
    <location>
        <begin position="414"/>
        <end position="434"/>
    </location>
</feature>
<feature type="topological domain" description="Periplasmic" evidence="1">
    <location>
        <begin position="435"/>
        <end position="458"/>
    </location>
</feature>
<feature type="transmembrane region" description="Helical" evidence="1">
    <location>
        <begin position="459"/>
        <end position="479"/>
    </location>
</feature>
<feature type="topological domain" description="Cytoplasmic" evidence="1">
    <location>
        <begin position="480"/>
        <end position="492"/>
    </location>
</feature>
<sequence length="492" mass="53594">MSTANKHPEAASLNAFKQPRSFYLIFSIELWERFGYYGLQGIMAVYLVKMLGMSEAQSITLFASFSALVYGLIAVGGWLGDKVLGTKRVIVLGTLVLALGYALVAWSGHDIAMIYFGMATIAVGNGLFKANPSSLLSTCYEKDDPRLDGAFTMYYMAINIGSFFSMLATPWLAAQFGWSTAFGLSFVGMLITLVNFMFFRKWVKDHGSKPDFAPLNMGKLLVTLLGIAVMIAAATWLLHNQDIARMVLGAVAVAIVVIFTKEALTLKGAARRKMIVAFLLMLEAIVFFVLYMQMPTSLNFFAIRNVEHSLLGIAFQPEQFQALNPFWIMIFSPLLAALYNKLGDRMPMPHKFALGMVLCSAAFLVLPLGASLANKMGIVSVGWLVLSYALQSVGELMISGLGLAMVAQLVPQRLMGFIMGSWFLTTAGAAMVAGKVANLMAVPENITNPLLSLHVYGDIFFKIGITTGVIAVLMILAAPLLNRMTQDEQPGV</sequence>
<name>DTPA_ERWP6</name>
<reference key="1">
    <citation type="journal article" date="2010" name="BMC Genomics">
        <title>Complete genome sequence of the fire blight pathogen Erwinia pyrifoliae DSM 12163T and comparative genomic insights into plant pathogenicity.</title>
        <authorList>
            <person name="Smits T.H."/>
            <person name="Jaenicke S."/>
            <person name="Rezzonico F."/>
            <person name="Kamber T."/>
            <person name="Goesmann A."/>
            <person name="Frey J.E."/>
            <person name="Duffy B."/>
        </authorList>
    </citation>
    <scope>NUCLEOTIDE SEQUENCE [LARGE SCALE GENOMIC DNA]</scope>
    <source>
        <strain>DSM 12163 / CIP 106111 / Ep16/96</strain>
    </source>
</reference>
<dbReference type="EMBL" id="FN392235">
    <property type="protein sequence ID" value="CAY74401.1"/>
    <property type="molecule type" value="Genomic_DNA"/>
</dbReference>
<dbReference type="RefSeq" id="WP_012668179.1">
    <property type="nucleotide sequence ID" value="NC_017390.1"/>
</dbReference>
<dbReference type="SMR" id="D2TBH1"/>
<dbReference type="GeneID" id="92236970"/>
<dbReference type="KEGG" id="epr:EPYR_02021"/>
<dbReference type="PATRIC" id="fig|644651.3.peg.1856"/>
<dbReference type="HOGENOM" id="CLU_004790_0_0_6"/>
<dbReference type="OrthoDB" id="9772725at2"/>
<dbReference type="GO" id="GO:0005886">
    <property type="term" value="C:plasma membrane"/>
    <property type="evidence" value="ECO:0007669"/>
    <property type="project" value="UniProtKB-SubCell"/>
</dbReference>
<dbReference type="GO" id="GO:0071916">
    <property type="term" value="F:dipeptide transmembrane transporter activity"/>
    <property type="evidence" value="ECO:0007669"/>
    <property type="project" value="UniProtKB-UniRule"/>
</dbReference>
<dbReference type="GO" id="GO:0015333">
    <property type="term" value="F:peptide:proton symporter activity"/>
    <property type="evidence" value="ECO:0007669"/>
    <property type="project" value="UniProtKB-UniRule"/>
</dbReference>
<dbReference type="GO" id="GO:0042937">
    <property type="term" value="F:tripeptide transmembrane transporter activity"/>
    <property type="evidence" value="ECO:0007669"/>
    <property type="project" value="UniProtKB-UniRule"/>
</dbReference>
<dbReference type="GO" id="GO:0015031">
    <property type="term" value="P:protein transport"/>
    <property type="evidence" value="ECO:0007669"/>
    <property type="project" value="UniProtKB-KW"/>
</dbReference>
<dbReference type="CDD" id="cd17346">
    <property type="entry name" value="MFS_DtpA_like"/>
    <property type="match status" value="1"/>
</dbReference>
<dbReference type="FunFam" id="1.20.1250.20:FF:000017">
    <property type="entry name" value="Dipeptide and tripeptide permease A"/>
    <property type="match status" value="1"/>
</dbReference>
<dbReference type="Gene3D" id="1.20.1250.20">
    <property type="entry name" value="MFS general substrate transporter like domains"/>
    <property type="match status" value="1"/>
</dbReference>
<dbReference type="HAMAP" id="MF_01878">
    <property type="entry name" value="PTR2_DtpA_subfam"/>
    <property type="match status" value="1"/>
</dbReference>
<dbReference type="InterPro" id="IPR023517">
    <property type="entry name" value="AA/pep_transptr_DtpA"/>
</dbReference>
<dbReference type="InterPro" id="IPR005279">
    <property type="entry name" value="Dipep/tripep_permease"/>
</dbReference>
<dbReference type="InterPro" id="IPR036259">
    <property type="entry name" value="MFS_trans_sf"/>
</dbReference>
<dbReference type="InterPro" id="IPR050171">
    <property type="entry name" value="MFS_Transporters"/>
</dbReference>
<dbReference type="InterPro" id="IPR000109">
    <property type="entry name" value="POT_fam"/>
</dbReference>
<dbReference type="InterPro" id="IPR018456">
    <property type="entry name" value="PTR2_symporter_CS"/>
</dbReference>
<dbReference type="NCBIfam" id="NF007137">
    <property type="entry name" value="PRK09584.1"/>
    <property type="match status" value="1"/>
</dbReference>
<dbReference type="NCBIfam" id="TIGR00924">
    <property type="entry name" value="yjdL_sub1_fam"/>
    <property type="match status" value="1"/>
</dbReference>
<dbReference type="PANTHER" id="PTHR23517:SF15">
    <property type="entry name" value="PROTON-DEPENDENT OLIGOPEPTIDE FAMILY TRANSPORT PROTEIN"/>
    <property type="match status" value="1"/>
</dbReference>
<dbReference type="PANTHER" id="PTHR23517">
    <property type="entry name" value="RESISTANCE PROTEIN MDTM, PUTATIVE-RELATED-RELATED"/>
    <property type="match status" value="1"/>
</dbReference>
<dbReference type="Pfam" id="PF00854">
    <property type="entry name" value="PTR2"/>
    <property type="match status" value="1"/>
</dbReference>
<dbReference type="SUPFAM" id="SSF103473">
    <property type="entry name" value="MFS general substrate transporter"/>
    <property type="match status" value="1"/>
</dbReference>
<dbReference type="PROSITE" id="PS01022">
    <property type="entry name" value="PTR2_1"/>
    <property type="match status" value="1"/>
</dbReference>
<dbReference type="PROSITE" id="PS01023">
    <property type="entry name" value="PTR2_2"/>
    <property type="match status" value="1"/>
</dbReference>